<proteinExistence type="evidence at protein level"/>
<accession>P0C7H8</accession>
<reference key="1">
    <citation type="journal article" date="2006" name="Nature">
        <title>DNA sequence of human chromosome 17 and analysis of rearrangement in the human lineage.</title>
        <authorList>
            <person name="Zody M.C."/>
            <person name="Garber M."/>
            <person name="Adams D.J."/>
            <person name="Sharpe T."/>
            <person name="Harrow J."/>
            <person name="Lupski J.R."/>
            <person name="Nicholson C."/>
            <person name="Searle S.M."/>
            <person name="Wilming L."/>
            <person name="Young S.K."/>
            <person name="Abouelleil A."/>
            <person name="Allen N.R."/>
            <person name="Bi W."/>
            <person name="Bloom T."/>
            <person name="Borowsky M.L."/>
            <person name="Bugalter B.E."/>
            <person name="Butler J."/>
            <person name="Chang J.L."/>
            <person name="Chen C.-K."/>
            <person name="Cook A."/>
            <person name="Corum B."/>
            <person name="Cuomo C.A."/>
            <person name="de Jong P.J."/>
            <person name="DeCaprio D."/>
            <person name="Dewar K."/>
            <person name="FitzGerald M."/>
            <person name="Gilbert J."/>
            <person name="Gibson R."/>
            <person name="Gnerre S."/>
            <person name="Goldstein S."/>
            <person name="Grafham D.V."/>
            <person name="Grocock R."/>
            <person name="Hafez N."/>
            <person name="Hagopian D.S."/>
            <person name="Hart E."/>
            <person name="Norman C.H."/>
            <person name="Humphray S."/>
            <person name="Jaffe D.B."/>
            <person name="Jones M."/>
            <person name="Kamal M."/>
            <person name="Khodiyar V.K."/>
            <person name="LaButti K."/>
            <person name="Laird G."/>
            <person name="Lehoczky J."/>
            <person name="Liu X."/>
            <person name="Lokyitsang T."/>
            <person name="Loveland J."/>
            <person name="Lui A."/>
            <person name="Macdonald P."/>
            <person name="Major J.E."/>
            <person name="Matthews L."/>
            <person name="Mauceli E."/>
            <person name="McCarroll S.A."/>
            <person name="Mihalev A.H."/>
            <person name="Mudge J."/>
            <person name="Nguyen C."/>
            <person name="Nicol R."/>
            <person name="O'Leary S.B."/>
            <person name="Osoegawa K."/>
            <person name="Schwartz D.C."/>
            <person name="Shaw-Smith C."/>
            <person name="Stankiewicz P."/>
            <person name="Steward C."/>
            <person name="Swarbreck D."/>
            <person name="Venkataraman V."/>
            <person name="Whittaker C.A."/>
            <person name="Yang X."/>
            <person name="Zimmer A.R."/>
            <person name="Bradley A."/>
            <person name="Hubbard T."/>
            <person name="Birren B.W."/>
            <person name="Rogers J."/>
            <person name="Lander E.S."/>
            <person name="Nusbaum C."/>
        </authorList>
    </citation>
    <scope>NUCLEOTIDE SEQUENCE [LARGE SCALE GENOMIC DNA]</scope>
</reference>
<reference key="2">
    <citation type="journal article" date="2001" name="J. Biol. Chem.">
        <title>Characterization of a cluster of human high/ultrahigh sulfur keratin-associated protein genes embedded in the type I keratin gene domain on chromosome 17q12-21.</title>
        <authorList>
            <person name="Rogers M.A."/>
            <person name="Langbein L."/>
            <person name="Winter H."/>
            <person name="Ehmann C."/>
            <person name="Praetzel S."/>
            <person name="Korn B."/>
            <person name="Schweizer J."/>
        </authorList>
    </citation>
    <scope>NUCLEOTIDE SEQUENCE [MRNA]</scope>
    <source>
        <tissue>Scalp</tissue>
    </source>
</reference>
<organism>
    <name type="scientific">Homo sapiens</name>
    <name type="common">Human</name>
    <dbReference type="NCBI Taxonomy" id="9606"/>
    <lineage>
        <taxon>Eukaryota</taxon>
        <taxon>Metazoa</taxon>
        <taxon>Chordata</taxon>
        <taxon>Craniata</taxon>
        <taxon>Vertebrata</taxon>
        <taxon>Euteleostomi</taxon>
        <taxon>Mammalia</taxon>
        <taxon>Eutheria</taxon>
        <taxon>Euarchontoglires</taxon>
        <taxon>Primates</taxon>
        <taxon>Haplorrhini</taxon>
        <taxon>Catarrhini</taxon>
        <taxon>Hominidae</taxon>
        <taxon>Homo</taxon>
    </lineage>
</organism>
<keyword id="KW-0416">Keratin</keyword>
<keyword id="KW-1185">Reference proteome</keyword>
<keyword id="KW-0677">Repeat</keyword>
<protein>
    <recommendedName>
        <fullName>Keratin-associated protein 2-3</fullName>
    </recommendedName>
    <alternativeName>
        <fullName>High sulfur keratin-associated protein 2.4</fullName>
    </alternativeName>
    <alternativeName>
        <fullName>Keratin-associated protein 2.3</fullName>
    </alternativeName>
</protein>
<name>KRA23_HUMAN</name>
<feature type="chain" id="PRO_0000331452" description="Keratin-associated protein 2-3">
    <location>
        <begin position="1"/>
        <end position="128"/>
    </location>
</feature>
<feature type="region of interest" description="10 X 5 AA repeats of C-C-[CDPQRWG]-[APRS]-[CIPSTVD]">
    <location>
        <begin position="5"/>
        <end position="112"/>
    </location>
</feature>
<sequence>MTGSCCGSTLSSLSYGGGCCQPCCCRDPCCCRPVTCQTTVCRPVTCVPRCTRPICEPCRRPVCCDPCSLQEGCCRPITCCPSSCTAVVCRPCCWATTCCQPVSVQSPCCRPPCGQPTPCSTTCRTSSC</sequence>
<gene>
    <name type="primary">KRTAP2-3</name>
    <name type="synonym">KAP2.3</name>
    <name type="synonym">KRTAP2.3</name>
</gene>
<comment type="function">
    <text evidence="1">In the hair cortex, hair keratin intermediate filaments are embedded in an interfilamentous matrix, consisting of hair keratin-associated proteins (KRTAP), which are essential for the formation of a rigid and resistant hair shaft through their extensive disulfide bond cross-linking with abundant cysteine residues of hair keratins. The matrix proteins include the high-sulfur and high-glycine-tyrosine keratins (By similarity).</text>
</comment>
<comment type="subunit">
    <text evidence="1">Interacts with hair keratins.</text>
</comment>
<comment type="interaction">
    <interactant intactId="EBI-10196781">
        <id>P0C7H8</id>
    </interactant>
    <interactant intactId="EBI-10221726">
        <id>P82987</id>
        <label>ADAMTSL3</label>
    </interactant>
    <organismsDiffer>false</organismsDiffer>
    <experiments>3</experiments>
</comment>
<comment type="interaction">
    <interactant intactId="EBI-10196781">
        <id>P0C7H8</id>
    </interactant>
    <interactant intactId="EBI-745934">
        <id>Q14781</id>
        <label>CBX2</label>
    </interactant>
    <organismsDiffer>false</organismsDiffer>
    <experiments>3</experiments>
</comment>
<comment type="interaction">
    <interactant intactId="EBI-10196781">
        <id>P0C7H8</id>
    </interactant>
    <interactant intactId="EBI-741032">
        <id>Q8NE01</id>
        <label>CNNM3</label>
    </interactant>
    <organismsDiffer>false</organismsDiffer>
    <experiments>3</experiments>
</comment>
<comment type="interaction">
    <interactant intactId="EBI-10196781">
        <id>P0C7H8</id>
    </interactant>
    <interactant intactId="EBI-10172150">
        <id>P60370</id>
        <label>KRTAP10-5</label>
    </interactant>
    <organismsDiffer>false</organismsDiffer>
    <experiments>3</experiments>
</comment>
<comment type="interaction">
    <interactant intactId="EBI-10196781">
        <id>P0C7H8</id>
    </interactant>
    <interactant intactId="EBI-7199479">
        <id>Q8WUK0</id>
        <label>PTPMT1</label>
    </interactant>
    <organismsDiffer>false</organismsDiffer>
    <experiments>3</experiments>
</comment>
<comment type="interaction">
    <interactant intactId="EBI-10196781">
        <id>P0C7H8</id>
    </interactant>
    <interactant intactId="EBI-353027">
        <id>P62857</id>
        <label>RPS28</label>
    </interactant>
    <organismsDiffer>false</organismsDiffer>
    <experiments>3</experiments>
</comment>
<comment type="interaction">
    <interactant intactId="EBI-10196781">
        <id>P0C7H8</id>
    </interactant>
    <interactant intactId="EBI-10313866">
        <id>Q9NUL5</id>
        <label>SHFL</label>
    </interactant>
    <organismsDiffer>false</organismsDiffer>
    <experiments>3</experiments>
</comment>
<comment type="interaction">
    <interactant intactId="EBI-10196781">
        <id>P0C7H8</id>
    </interactant>
    <interactant intactId="EBI-10278423">
        <id>Q8WZ59</id>
        <label>TMEM190</label>
    </interactant>
    <organismsDiffer>false</organismsDiffer>
    <experiments>3</experiments>
</comment>
<comment type="interaction">
    <interactant intactId="EBI-10196781">
        <id>P0C7H8</id>
    </interactant>
    <interactant intactId="EBI-6427977">
        <id>Q96SQ5</id>
        <label>ZNF587</label>
    </interactant>
    <organismsDiffer>false</organismsDiffer>
    <experiments>3</experiments>
</comment>
<comment type="similarity">
    <text evidence="2">Belongs to the KRTAP type 2 family.</text>
</comment>
<dbReference type="EMBL" id="AC100808">
    <property type="status" value="NOT_ANNOTATED_CDS"/>
    <property type="molecule type" value="Genomic_DNA"/>
</dbReference>
<dbReference type="CCDS" id="CCDS54123.1"/>
<dbReference type="RefSeq" id="NP_001158724.1">
    <property type="nucleotide sequence ID" value="NM_001165252.2"/>
</dbReference>
<dbReference type="RefSeq" id="NP_149440.1">
    <property type="nucleotide sequence ID" value="NM_033184.3"/>
</dbReference>
<dbReference type="BioGRID" id="124458">
    <property type="interactions" value="101"/>
</dbReference>
<dbReference type="BioGRID" id="611123">
    <property type="interactions" value="94"/>
</dbReference>
<dbReference type="FunCoup" id="P0C7H8">
    <property type="interactions" value="132"/>
</dbReference>
<dbReference type="IntAct" id="P0C7H8">
    <property type="interactions" value="9"/>
</dbReference>
<dbReference type="STRING" id="9606.ENSP00000375237"/>
<dbReference type="BioMuta" id="KRTAP2-3"/>
<dbReference type="DMDM" id="425906047"/>
<dbReference type="jPOST" id="P0C7H8"/>
<dbReference type="MassIVE" id="P0C7H8"/>
<dbReference type="PaxDb" id="9606-ENSP00000375237"/>
<dbReference type="PeptideAtlas" id="P0C7H8"/>
<dbReference type="ProteomicsDB" id="52334"/>
<dbReference type="Antibodypedia" id="68313">
    <property type="antibodies" value="1 antibodies from 1 providers"/>
</dbReference>
<dbReference type="DNASU" id="85294"/>
<dbReference type="Ensembl" id="ENST00000391418.3">
    <property type="protein sequence ID" value="ENSP00000375237.2"/>
    <property type="gene ID" value="ENSG00000212724.3"/>
</dbReference>
<dbReference type="Ensembl" id="ENST00000570303.2">
    <property type="protein sequence ID" value="ENSP00000459261.1"/>
    <property type="gene ID" value="ENSG00000262862.2"/>
</dbReference>
<dbReference type="Ensembl" id="ENST00000709598.1">
    <property type="protein sequence ID" value="ENSP00000517787.1"/>
    <property type="gene ID" value="ENSG00000292034.1"/>
</dbReference>
<dbReference type="GeneID" id="730755"/>
<dbReference type="GeneID" id="85294"/>
<dbReference type="KEGG" id="hsa:730755"/>
<dbReference type="KEGG" id="hsa:85294"/>
<dbReference type="MANE-Select" id="ENST00000391418.3">
    <property type="protein sequence ID" value="ENSP00000375237.2"/>
    <property type="RefSeq nucleotide sequence ID" value="NM_001165252.2"/>
    <property type="RefSeq protein sequence ID" value="NP_001158724.1"/>
</dbReference>
<dbReference type="AGR" id="HGNC:18891"/>
<dbReference type="AGR" id="HGNC:18906"/>
<dbReference type="CTD" id="730755"/>
<dbReference type="CTD" id="85294"/>
<dbReference type="GeneCards" id="KRTAP2-3"/>
<dbReference type="HGNC" id="HGNC:18906">
    <property type="gene designation" value="KRTAP2-3"/>
</dbReference>
<dbReference type="HPA" id="ENSG00000212724">
    <property type="expression patterns" value="Tissue enriched (skin)"/>
</dbReference>
<dbReference type="neXtProt" id="NX_P0C7H8"/>
<dbReference type="OpenTargets" id="ENSG00000212724"/>
<dbReference type="OpenTargets" id="ENSG00000213417"/>
<dbReference type="VEuPathDB" id="HostDB:ENSG00000212724"/>
<dbReference type="eggNOG" id="KOG4726">
    <property type="taxonomic scope" value="Eukaryota"/>
</dbReference>
<dbReference type="HOGENOM" id="CLU_113141_3_0_1"/>
<dbReference type="InParanoid" id="P0C7H8"/>
<dbReference type="OMA" id="SYQTTVC"/>
<dbReference type="OrthoDB" id="9538749at2759"/>
<dbReference type="PAN-GO" id="P0C7H8">
    <property type="GO annotations" value="0 GO annotations based on evolutionary models"/>
</dbReference>
<dbReference type="PhylomeDB" id="P0C7H8"/>
<dbReference type="PathwayCommons" id="P0C7H8"/>
<dbReference type="Reactome" id="R-HSA-6805567">
    <property type="pathway name" value="Keratinization"/>
</dbReference>
<dbReference type="SignaLink" id="P0C7H8"/>
<dbReference type="BioGRID-ORCS" id="730755">
    <property type="hits" value="18 hits in 310 CRISPR screens"/>
</dbReference>
<dbReference type="BioGRID-ORCS" id="85294">
    <property type="hits" value="15 hits in 664 CRISPR screens"/>
</dbReference>
<dbReference type="Pharos" id="P0C7H8">
    <property type="development level" value="Tdark"/>
</dbReference>
<dbReference type="PRO" id="PR:P0C7H8"/>
<dbReference type="Proteomes" id="UP000005640">
    <property type="component" value="Chromosome 17"/>
</dbReference>
<dbReference type="RNAct" id="P0C7H8">
    <property type="molecule type" value="protein"/>
</dbReference>
<dbReference type="Bgee" id="ENSG00000212724">
    <property type="expression patterns" value="Expressed in islet of Langerhans and 21 other cell types or tissues"/>
</dbReference>
<dbReference type="GO" id="GO:0005829">
    <property type="term" value="C:cytosol"/>
    <property type="evidence" value="ECO:0000304"/>
    <property type="project" value="Reactome"/>
</dbReference>
<dbReference type="GO" id="GO:0045095">
    <property type="term" value="C:keratin filament"/>
    <property type="evidence" value="ECO:0007669"/>
    <property type="project" value="InterPro"/>
</dbReference>
<dbReference type="InterPro" id="IPR002494">
    <property type="entry name" value="KAP"/>
</dbReference>
<dbReference type="InterPro" id="IPR052154">
    <property type="entry name" value="KRTAP_type_2-like"/>
</dbReference>
<dbReference type="PANTHER" id="PTHR48425">
    <property type="entry name" value="KERATIN-ASSOCIATED PROTEIN 2-1"/>
    <property type="match status" value="1"/>
</dbReference>
<dbReference type="PANTHER" id="PTHR48425:SF1">
    <property type="entry name" value="KERATIN-ASSOCIATED PROTEIN 2-1"/>
    <property type="match status" value="1"/>
</dbReference>
<dbReference type="Pfam" id="PF01500">
    <property type="entry name" value="Keratin_B2"/>
    <property type="match status" value="1"/>
</dbReference>
<dbReference type="Pfam" id="PF13885">
    <property type="entry name" value="Keratin_B2_2"/>
    <property type="match status" value="1"/>
</dbReference>
<evidence type="ECO:0000250" key="1"/>
<evidence type="ECO:0000305" key="2"/>